<feature type="chain" id="PRO_0000202076" description="Putative sodium-dependent excitatory amino acid transporter glt-4">
    <location>
        <begin position="1"/>
        <end position="499"/>
    </location>
</feature>
<feature type="topological domain" description="Cytoplasmic" evidence="4">
    <location>
        <begin position="1"/>
        <end position="7"/>
    </location>
</feature>
<feature type="transmembrane region" description="Helical" evidence="4">
    <location>
        <begin position="8"/>
        <end position="28"/>
    </location>
</feature>
<feature type="transmembrane region" description="Helical" evidence="4">
    <location>
        <begin position="50"/>
        <end position="70"/>
    </location>
</feature>
<feature type="transmembrane region" description="Helical" evidence="4">
    <location>
        <begin position="87"/>
        <end position="107"/>
    </location>
</feature>
<feature type="transmembrane region" description="Helical; Name=4" evidence="3">
    <location>
        <begin position="194"/>
        <end position="217"/>
    </location>
</feature>
<feature type="transmembrane region" description="Helical; Name=5" evidence="3">
    <location>
        <begin position="227"/>
        <end position="254"/>
    </location>
</feature>
<feature type="transmembrane region" description="Helical; Name=6" evidence="3">
    <location>
        <begin position="276"/>
        <end position="297"/>
    </location>
</feature>
<feature type="intramembrane region" description="Discontinuously helical" evidence="3">
    <location>
        <begin position="303"/>
        <end position="333"/>
    </location>
</feature>
<feature type="transmembrane region" description="Helical; Name=7" evidence="3">
    <location>
        <begin position="343"/>
        <end position="369"/>
    </location>
</feature>
<feature type="intramembrane region" description="Discontinuously helical" evidence="3">
    <location>
        <begin position="383"/>
        <end position="416"/>
    </location>
</feature>
<feature type="transmembrane region" description="Helical; Name=8" evidence="3">
    <location>
        <begin position="430"/>
        <end position="451"/>
    </location>
</feature>
<feature type="binding site" evidence="3">
    <location>
        <begin position="320"/>
        <end position="322"/>
    </location>
    <ligand>
        <name>L-aspartate</name>
        <dbReference type="ChEBI" id="CHEBI:29991"/>
    </ligand>
</feature>
<feature type="binding site" evidence="2">
    <location>
        <position position="351"/>
    </location>
    <ligand>
        <name>Na(+)</name>
        <dbReference type="ChEBI" id="CHEBI:29101"/>
        <label>1</label>
    </ligand>
</feature>
<feature type="binding site" evidence="3">
    <location>
        <position position="353"/>
    </location>
    <ligand>
        <name>Na(+)</name>
        <dbReference type="ChEBI" id="CHEBI:29101"/>
        <label>2</label>
    </ligand>
</feature>
<feature type="binding site" evidence="2">
    <location>
        <position position="355"/>
    </location>
    <ligand>
        <name>Na(+)</name>
        <dbReference type="ChEBI" id="CHEBI:29101"/>
        <label>1</label>
    </ligand>
</feature>
<feature type="binding site" evidence="3">
    <location>
        <position position="359"/>
    </location>
    <ligand>
        <name>L-aspartate</name>
        <dbReference type="ChEBI" id="CHEBI:29991"/>
    </ligand>
</feature>
<feature type="binding site" evidence="3">
    <location>
        <begin position="400"/>
        <end position="404"/>
    </location>
    <ligand>
        <name>L-aspartate</name>
        <dbReference type="ChEBI" id="CHEBI:29991"/>
    </ligand>
</feature>
<feature type="binding site" evidence="3">
    <location>
        <position position="433"/>
    </location>
    <ligand>
        <name>L-aspartate</name>
        <dbReference type="ChEBI" id="CHEBI:29991"/>
    </ligand>
</feature>
<feature type="binding site" evidence="3">
    <location>
        <position position="440"/>
    </location>
    <ligand>
        <name>L-aspartate</name>
        <dbReference type="ChEBI" id="CHEBI:29991"/>
    </ligand>
</feature>
<feature type="binding site" evidence="2">
    <location>
        <position position="440"/>
    </location>
    <ligand>
        <name>Na(+)</name>
        <dbReference type="ChEBI" id="CHEBI:29101"/>
        <label>1</label>
    </ligand>
</feature>
<feature type="binding site" evidence="2">
    <location>
        <position position="444"/>
    </location>
    <ligand>
        <name>Na(+)</name>
        <dbReference type="ChEBI" id="CHEBI:29101"/>
        <label>1</label>
    </ligand>
</feature>
<feature type="glycosylation site" description="N-linked (GlcNAc...) asparagine" evidence="4">
    <location>
        <position position="165"/>
    </location>
</feature>
<gene>
    <name type="primary">glt-4</name>
    <name type="ORF">T22E5.2</name>
</gene>
<reference key="1">
    <citation type="journal article" date="1998" name="Science">
        <title>Genome sequence of the nematode C. elegans: a platform for investigating biology.</title>
        <authorList>
            <consortium name="The C. elegans sequencing consortium"/>
        </authorList>
    </citation>
    <scope>NUCLEOTIDE SEQUENCE [LARGE SCALE GENOMIC DNA]</scope>
    <source>
        <strain>Bristol N2</strain>
    </source>
</reference>
<keyword id="KW-0029">Amino-acid transport</keyword>
<keyword id="KW-1003">Cell membrane</keyword>
<keyword id="KW-0868">Chloride</keyword>
<keyword id="KW-0325">Glycoprotein</keyword>
<keyword id="KW-0472">Membrane</keyword>
<keyword id="KW-0479">Metal-binding</keyword>
<keyword id="KW-0630">Potassium</keyword>
<keyword id="KW-1185">Reference proteome</keyword>
<keyword id="KW-0915">Sodium</keyword>
<keyword id="KW-0769">Symport</keyword>
<keyword id="KW-0812">Transmembrane</keyword>
<keyword id="KW-1133">Transmembrane helix</keyword>
<keyword id="KW-0813">Transport</keyword>
<protein>
    <recommendedName>
        <fullName>Putative sodium-dependent excitatory amino acid transporter glt-4</fullName>
    </recommendedName>
</protein>
<proteinExistence type="inferred from homology"/>
<dbReference type="EMBL" id="FO081616">
    <property type="protein sequence ID" value="CCD72844.1"/>
    <property type="molecule type" value="Genomic_DNA"/>
</dbReference>
<dbReference type="PIR" id="T16921">
    <property type="entry name" value="T16921"/>
</dbReference>
<dbReference type="RefSeq" id="NP_509075.3">
    <property type="nucleotide sequence ID" value="NM_076674.5"/>
</dbReference>
<dbReference type="SMR" id="Q22682"/>
<dbReference type="FunCoup" id="Q22682">
    <property type="interactions" value="73"/>
</dbReference>
<dbReference type="STRING" id="6239.T22E5.2.1"/>
<dbReference type="GlyCosmos" id="Q22682">
    <property type="glycosylation" value="1 site, No reported glycans"/>
</dbReference>
<dbReference type="PaxDb" id="6239-T22E5.2"/>
<dbReference type="PeptideAtlas" id="Q22682"/>
<dbReference type="EnsemblMetazoa" id="T22E5.2a.1">
    <property type="protein sequence ID" value="T22E5.2a.1"/>
    <property type="gene ID" value="WBGene00001622"/>
</dbReference>
<dbReference type="GeneID" id="188744"/>
<dbReference type="KEGG" id="cel:CELE_T22E5.2"/>
<dbReference type="UCSC" id="T22E5.2">
    <property type="organism name" value="c. elegans"/>
</dbReference>
<dbReference type="AGR" id="WB:WBGene00001622"/>
<dbReference type="CTD" id="188744"/>
<dbReference type="WormBase" id="T22E5.2a">
    <property type="protein sequence ID" value="CE38553"/>
    <property type="gene ID" value="WBGene00001622"/>
    <property type="gene designation" value="glt-4"/>
</dbReference>
<dbReference type="eggNOG" id="KOG3787">
    <property type="taxonomic scope" value="Eukaryota"/>
</dbReference>
<dbReference type="GeneTree" id="ENSGT00940000167953"/>
<dbReference type="HOGENOM" id="CLU_019375_3_2_1"/>
<dbReference type="InParanoid" id="Q22682"/>
<dbReference type="OMA" id="CCEENNK"/>
<dbReference type="OrthoDB" id="5877963at2759"/>
<dbReference type="PhylomeDB" id="Q22682"/>
<dbReference type="Reactome" id="R-CEL-210455">
    <property type="pathway name" value="Astrocytic Glutamate-Glutamine Uptake And Metabolism"/>
</dbReference>
<dbReference type="Reactome" id="R-CEL-210500">
    <property type="pathway name" value="Glutamate Neurotransmitter Release Cycle"/>
</dbReference>
<dbReference type="Reactome" id="R-CEL-352230">
    <property type="pathway name" value="Amino acid transport across the plasma membrane"/>
</dbReference>
<dbReference type="Reactome" id="R-CEL-425393">
    <property type="pathway name" value="Transport of inorganic cations/anions and amino acids/oligopeptides"/>
</dbReference>
<dbReference type="Reactome" id="R-CEL-9013149">
    <property type="pathway name" value="RAC1 GTPase cycle"/>
</dbReference>
<dbReference type="Reactome" id="R-CEL-9013406">
    <property type="pathway name" value="RHOQ GTPase cycle"/>
</dbReference>
<dbReference type="Reactome" id="R-CEL-9013407">
    <property type="pathway name" value="RHOH GTPase cycle"/>
</dbReference>
<dbReference type="Reactome" id="R-CEL-9013423">
    <property type="pathway name" value="RAC3 GTPase cycle"/>
</dbReference>
<dbReference type="PRO" id="PR:Q22682"/>
<dbReference type="Proteomes" id="UP000001940">
    <property type="component" value="Chromosome X"/>
</dbReference>
<dbReference type="Bgee" id="WBGene00001622">
    <property type="expression patterns" value="Expressed in larva and 3 other cell types or tissues"/>
</dbReference>
<dbReference type="GO" id="GO:0005886">
    <property type="term" value="C:plasma membrane"/>
    <property type="evidence" value="ECO:0000318"/>
    <property type="project" value="GO_Central"/>
</dbReference>
<dbReference type="GO" id="GO:0015501">
    <property type="term" value="F:glutamate:sodium symporter activity"/>
    <property type="evidence" value="ECO:0000318"/>
    <property type="project" value="GO_Central"/>
</dbReference>
<dbReference type="GO" id="GO:0005313">
    <property type="term" value="F:L-glutamate transmembrane transporter activity"/>
    <property type="evidence" value="ECO:0000318"/>
    <property type="project" value="GO_Central"/>
</dbReference>
<dbReference type="GO" id="GO:0046872">
    <property type="term" value="F:metal ion binding"/>
    <property type="evidence" value="ECO:0007669"/>
    <property type="project" value="UniProtKB-KW"/>
</dbReference>
<dbReference type="GO" id="GO:0015175">
    <property type="term" value="F:neutral L-amino acid transmembrane transporter activity"/>
    <property type="evidence" value="ECO:0000318"/>
    <property type="project" value="GO_Central"/>
</dbReference>
<dbReference type="GO" id="GO:0015813">
    <property type="term" value="P:L-glutamate transmembrane transport"/>
    <property type="evidence" value="ECO:0000318"/>
    <property type="project" value="GO_Central"/>
</dbReference>
<dbReference type="Gene3D" id="1.10.3860.10">
    <property type="entry name" value="Sodium:dicarboxylate symporter"/>
    <property type="match status" value="1"/>
</dbReference>
<dbReference type="InterPro" id="IPR050746">
    <property type="entry name" value="DAACS"/>
</dbReference>
<dbReference type="InterPro" id="IPR001991">
    <property type="entry name" value="Na-dicarboxylate_symporter"/>
</dbReference>
<dbReference type="InterPro" id="IPR018107">
    <property type="entry name" value="Na-dicarboxylate_symporter_CS"/>
</dbReference>
<dbReference type="InterPro" id="IPR036458">
    <property type="entry name" value="Na:dicarbo_symporter_sf"/>
</dbReference>
<dbReference type="PANTHER" id="PTHR11958:SF105">
    <property type="entry name" value="SODIUM-DEPENDENT EXCITATORY AMINO ACID TRANSPORTER GLT-4-RELATED"/>
    <property type="match status" value="1"/>
</dbReference>
<dbReference type="PANTHER" id="PTHR11958">
    <property type="entry name" value="SODIUM/DICARBOXYLATE SYMPORTER-RELATED"/>
    <property type="match status" value="1"/>
</dbReference>
<dbReference type="Pfam" id="PF00375">
    <property type="entry name" value="SDF"/>
    <property type="match status" value="1"/>
</dbReference>
<dbReference type="PRINTS" id="PR00173">
    <property type="entry name" value="EDTRNSPORT"/>
</dbReference>
<dbReference type="SUPFAM" id="SSF118215">
    <property type="entry name" value="Proton glutamate symport protein"/>
    <property type="match status" value="1"/>
</dbReference>
<dbReference type="PROSITE" id="PS00713">
    <property type="entry name" value="NA_DICARBOXYL_SYMP_1"/>
    <property type="match status" value="1"/>
</dbReference>
<dbReference type="PROSITE" id="PS00714">
    <property type="entry name" value="NA_DICARBOXYL_SYMP_2"/>
    <property type="match status" value="1"/>
</dbReference>
<evidence type="ECO:0000250" key="1">
    <source>
        <dbReference type="UniProtKB" id="O35921"/>
    </source>
</evidence>
<evidence type="ECO:0000250" key="2">
    <source>
        <dbReference type="UniProtKB" id="O59010"/>
    </source>
</evidence>
<evidence type="ECO:0000250" key="3">
    <source>
        <dbReference type="UniProtKB" id="P43003"/>
    </source>
</evidence>
<evidence type="ECO:0000255" key="4"/>
<evidence type="ECO:0000305" key="5"/>
<comment type="function">
    <text evidence="1">Sodium-dependent, high-affinity amino acid transporter that mediates the uptake of L-glutamate and also L-aspartate and D-aspartate. Functions as a symporter that transports one amino acid molecule together with two or three Na(+) ions and one proton, in parallel with the counter-transport of one K(+) ion. Mediates Cl(-) flux that is not coupled to amino acid transport; this avoids the accumulation of negative charges due to aspartate and Na(+) symport.</text>
</comment>
<comment type="subcellular location">
    <subcellularLocation>
        <location evidence="1">Cell membrane</location>
        <topology evidence="1">Multi-pass membrane protein</topology>
    </subcellularLocation>
</comment>
<comment type="domain">
    <text evidence="3">Contains eight transmembrane regions plus two helical hairpins that dip into the membrane. These helical hairpin structures play an important role in the transport process. The first enters the membrane from the cytoplasmic side, the second one from the extracellular side. During the transport cycle, the regions involved in amino acid transport, and especially the helical hairpins, move vertically by about 15-18 Angstroms, alternating between exposure to the aqueous phase and reinsertion in the lipid bilayer. In contrast, the regions involved in trimerization do not move.</text>
</comment>
<comment type="similarity">
    <text evidence="5">Belongs to the dicarboxylate/amino acid:cation symporter (DAACS) (TC 2.A.23) family.</text>
</comment>
<accession>Q22682</accession>
<organism>
    <name type="scientific">Caenorhabditis elegans</name>
    <dbReference type="NCBI Taxonomy" id="6239"/>
    <lineage>
        <taxon>Eukaryota</taxon>
        <taxon>Metazoa</taxon>
        <taxon>Ecdysozoa</taxon>
        <taxon>Nematoda</taxon>
        <taxon>Chromadorea</taxon>
        <taxon>Rhabditida</taxon>
        <taxon>Rhabditina</taxon>
        <taxon>Rhabditomorpha</taxon>
        <taxon>Rhabditoidea</taxon>
        <taxon>Rhabditidae</taxon>
        <taxon>Peloderinae</taxon>
        <taxon>Caenorhabditis</taxon>
    </lineage>
</organism>
<name>EAA4_CAEEL</name>
<sequence>MAKLSKENLLLLFTVLGVVVGIGLGFSLRDPSKAWSKRHLSYLRFPGDLFVQMLKMLILPMIMSSIITSLASLDSGTAGRLGMVSMIYYTLTTFFAVFLGIVLVSVIKPGKWTTTNIEDLVGHVKTTPCVATAVDTIIDLMKSCFPENLIEATFRSQKICLKFFNGTTEIPPEIAMTMSPEQRAQFTEVPEKIVSDGMNILGLVVFSVALGIVIGVIGEDGKPMKNFFKSLEACSMKLIGWVIIYSPVGITFLIAAQIVGMKDPGQELHRLMGYVITVILGLLIHAFVVIPLLCVVLARRNPIKFVGGMAQALLTALATSSSSATLPLSIKCCEENNKVDPRVTRFVLPLGATINMDGTALYEAVAAIYISQCYGNDLSLGEVVLVSLTATLASIGAAGIPQAGIVTMIMVLIAIGLPTNLFILIFPVDFMLDRLRTTVNVHGDSIATAVIERLCEDQLQKGGHHLDTNDQGYSMLSTNASPDPKRITIGNNCENSHML</sequence>